<organism>
    <name type="scientific">Mus musculus</name>
    <name type="common">Mouse</name>
    <dbReference type="NCBI Taxonomy" id="10090"/>
    <lineage>
        <taxon>Eukaryota</taxon>
        <taxon>Metazoa</taxon>
        <taxon>Chordata</taxon>
        <taxon>Craniata</taxon>
        <taxon>Vertebrata</taxon>
        <taxon>Euteleostomi</taxon>
        <taxon>Mammalia</taxon>
        <taxon>Eutheria</taxon>
        <taxon>Euarchontoglires</taxon>
        <taxon>Glires</taxon>
        <taxon>Rodentia</taxon>
        <taxon>Myomorpha</taxon>
        <taxon>Muroidea</taxon>
        <taxon>Muridae</taxon>
        <taxon>Murinae</taxon>
        <taxon>Mus</taxon>
        <taxon>Mus</taxon>
    </lineage>
</organism>
<name>TULP3_MOUSE</name>
<evidence type="ECO:0000250" key="1"/>
<evidence type="ECO:0000250" key="2">
    <source>
        <dbReference type="UniProtKB" id="O75386"/>
    </source>
</evidence>
<evidence type="ECO:0000256" key="3">
    <source>
        <dbReference type="SAM" id="MobiDB-lite"/>
    </source>
</evidence>
<evidence type="ECO:0000269" key="4">
    <source>
    </source>
</evidence>
<evidence type="ECO:0000269" key="5">
    <source>
    </source>
</evidence>
<evidence type="ECO:0000269" key="6">
    <source>
    </source>
</evidence>
<evidence type="ECO:0000269" key="7">
    <source>
    </source>
</evidence>
<evidence type="ECO:0000269" key="8">
    <source>
    </source>
</evidence>
<evidence type="ECO:0000305" key="9"/>
<evidence type="ECO:0000312" key="10">
    <source>
        <dbReference type="MGI" id="MGI:1329045"/>
    </source>
</evidence>
<protein>
    <recommendedName>
        <fullName evidence="9">Tubby-related protein 3</fullName>
    </recommendedName>
    <alternativeName>
        <fullName>Tubby-like protein 3</fullName>
    </alternativeName>
</protein>
<proteinExistence type="evidence at protein level"/>
<dbReference type="EMBL" id="AF045582">
    <property type="protein sequence ID" value="AAC95430.1"/>
    <property type="molecule type" value="mRNA"/>
</dbReference>
<dbReference type="EMBL" id="AB016963">
    <property type="protein sequence ID" value="BAA74752.1"/>
    <property type="molecule type" value="mRNA"/>
</dbReference>
<dbReference type="EMBL" id="BC060068">
    <property type="protein sequence ID" value="AAH60068.1"/>
    <property type="molecule type" value="mRNA"/>
</dbReference>
<dbReference type="CCDS" id="CCDS39647.1"/>
<dbReference type="RefSeq" id="NP_035787.1">
    <property type="nucleotide sequence ID" value="NM_011657.2"/>
</dbReference>
<dbReference type="SMR" id="O88413"/>
<dbReference type="BioGRID" id="204384">
    <property type="interactions" value="18"/>
</dbReference>
<dbReference type="FunCoup" id="O88413">
    <property type="interactions" value="1137"/>
</dbReference>
<dbReference type="STRING" id="10090.ENSMUSP00000001562"/>
<dbReference type="iPTMnet" id="O88413"/>
<dbReference type="PhosphoSitePlus" id="O88413"/>
<dbReference type="jPOST" id="O88413"/>
<dbReference type="PaxDb" id="10090-ENSMUSP00000001562"/>
<dbReference type="PeptideAtlas" id="O88413"/>
<dbReference type="ProteomicsDB" id="298384"/>
<dbReference type="Pumba" id="O88413"/>
<dbReference type="Antibodypedia" id="10458">
    <property type="antibodies" value="267 antibodies from 24 providers"/>
</dbReference>
<dbReference type="DNASU" id="22158"/>
<dbReference type="Ensembl" id="ENSMUST00000001562.9">
    <property type="protein sequence ID" value="ENSMUSP00000001562.7"/>
    <property type="gene ID" value="ENSMUSG00000001521.13"/>
</dbReference>
<dbReference type="GeneID" id="22158"/>
<dbReference type="KEGG" id="mmu:22158"/>
<dbReference type="UCSC" id="uc009edh.1">
    <property type="organism name" value="mouse"/>
</dbReference>
<dbReference type="AGR" id="MGI:1329045"/>
<dbReference type="CTD" id="7289"/>
<dbReference type="MGI" id="MGI:1329045">
    <property type="gene designation" value="Tulp3"/>
</dbReference>
<dbReference type="VEuPathDB" id="HostDB:ENSMUSG00000001521"/>
<dbReference type="eggNOG" id="KOG2502">
    <property type="taxonomic scope" value="Eukaryota"/>
</dbReference>
<dbReference type="GeneTree" id="ENSGT00940000158155"/>
<dbReference type="HOGENOM" id="CLU_028236_1_1_1"/>
<dbReference type="InParanoid" id="O88413"/>
<dbReference type="OMA" id="EPHTPHN"/>
<dbReference type="OrthoDB" id="8775810at2759"/>
<dbReference type="PhylomeDB" id="O88413"/>
<dbReference type="TreeFam" id="TF314076"/>
<dbReference type="Reactome" id="R-MMU-5610787">
    <property type="pathway name" value="Hedgehog 'off' state"/>
</dbReference>
<dbReference type="BioGRID-ORCS" id="22158">
    <property type="hits" value="5 hits in 78 CRISPR screens"/>
</dbReference>
<dbReference type="ChiTaRS" id="Tulp3">
    <property type="organism name" value="mouse"/>
</dbReference>
<dbReference type="PRO" id="PR:O88413"/>
<dbReference type="Proteomes" id="UP000000589">
    <property type="component" value="Chromosome 6"/>
</dbReference>
<dbReference type="RNAct" id="O88413">
    <property type="molecule type" value="protein"/>
</dbReference>
<dbReference type="Bgee" id="ENSMUSG00000001521">
    <property type="expression patterns" value="Expressed in animal zygote and 243 other cell types or tissues"/>
</dbReference>
<dbReference type="ExpressionAtlas" id="O88413">
    <property type="expression patterns" value="baseline and differential"/>
</dbReference>
<dbReference type="GO" id="GO:0097731">
    <property type="term" value="C:9+0 non-motile cilium"/>
    <property type="evidence" value="ECO:0000266"/>
    <property type="project" value="MGI"/>
</dbReference>
<dbReference type="GO" id="GO:0005930">
    <property type="term" value="C:axoneme"/>
    <property type="evidence" value="ECO:0000314"/>
    <property type="project" value="MGI"/>
</dbReference>
<dbReference type="GO" id="GO:0036064">
    <property type="term" value="C:ciliary basal body"/>
    <property type="evidence" value="ECO:0007669"/>
    <property type="project" value="Ensembl"/>
</dbReference>
<dbReference type="GO" id="GO:0097546">
    <property type="term" value="C:ciliary base"/>
    <property type="evidence" value="ECO:0000266"/>
    <property type="project" value="MGI"/>
</dbReference>
<dbReference type="GO" id="GO:0005929">
    <property type="term" value="C:cilium"/>
    <property type="evidence" value="ECO:0000314"/>
    <property type="project" value="UniProtKB"/>
</dbReference>
<dbReference type="GO" id="GO:0005576">
    <property type="term" value="C:extracellular region"/>
    <property type="evidence" value="ECO:0007669"/>
    <property type="project" value="UniProtKB-SubCell"/>
</dbReference>
<dbReference type="GO" id="GO:0005730">
    <property type="term" value="C:nucleolus"/>
    <property type="evidence" value="ECO:0007669"/>
    <property type="project" value="Ensembl"/>
</dbReference>
<dbReference type="GO" id="GO:0005654">
    <property type="term" value="C:nucleoplasm"/>
    <property type="evidence" value="ECO:0007669"/>
    <property type="project" value="Ensembl"/>
</dbReference>
<dbReference type="GO" id="GO:0005634">
    <property type="term" value="C:nucleus"/>
    <property type="evidence" value="ECO:0000250"/>
    <property type="project" value="UniProtKB"/>
</dbReference>
<dbReference type="GO" id="GO:0005886">
    <property type="term" value="C:plasma membrane"/>
    <property type="evidence" value="ECO:0000266"/>
    <property type="project" value="MGI"/>
</dbReference>
<dbReference type="GO" id="GO:0019899">
    <property type="term" value="F:enzyme binding"/>
    <property type="evidence" value="ECO:0007669"/>
    <property type="project" value="Ensembl"/>
</dbReference>
<dbReference type="GO" id="GO:0001664">
    <property type="term" value="F:G protein-coupled receptor binding"/>
    <property type="evidence" value="ECO:0000266"/>
    <property type="project" value="MGI"/>
</dbReference>
<dbReference type="GO" id="GO:0120160">
    <property type="term" value="F:intraciliary transport particle A binding"/>
    <property type="evidence" value="ECO:0000250"/>
    <property type="project" value="UniProtKB"/>
</dbReference>
<dbReference type="GO" id="GO:0035091">
    <property type="term" value="F:phosphatidylinositol binding"/>
    <property type="evidence" value="ECO:0000250"/>
    <property type="project" value="UniProtKB"/>
</dbReference>
<dbReference type="GO" id="GO:0044877">
    <property type="term" value="F:protein-containing complex binding"/>
    <property type="evidence" value="ECO:0000266"/>
    <property type="project" value="MGI"/>
</dbReference>
<dbReference type="GO" id="GO:0009952">
    <property type="term" value="P:anterior/posterior pattern specification"/>
    <property type="evidence" value="ECO:0000315"/>
    <property type="project" value="MGI"/>
</dbReference>
<dbReference type="GO" id="GO:0060348">
    <property type="term" value="P:bone development"/>
    <property type="evidence" value="ECO:0000315"/>
    <property type="project" value="MGI"/>
</dbReference>
<dbReference type="GO" id="GO:0007420">
    <property type="term" value="P:brain development"/>
    <property type="evidence" value="ECO:0000315"/>
    <property type="project" value="MGI"/>
</dbReference>
<dbReference type="GO" id="GO:0060434">
    <property type="term" value="P:bronchus morphogenesis"/>
    <property type="evidence" value="ECO:0000315"/>
    <property type="project" value="MGI"/>
</dbReference>
<dbReference type="GO" id="GO:0021953">
    <property type="term" value="P:central nervous system neuron differentiation"/>
    <property type="evidence" value="ECO:0000315"/>
    <property type="project" value="MGI"/>
</dbReference>
<dbReference type="GO" id="GO:0021904">
    <property type="term" value="P:dorsal/ventral neural tube patterning"/>
    <property type="evidence" value="ECO:0000315"/>
    <property type="project" value="MGI"/>
</dbReference>
<dbReference type="GO" id="GO:0031076">
    <property type="term" value="P:embryonic camera-type eye development"/>
    <property type="evidence" value="ECO:0000315"/>
    <property type="project" value="MGI"/>
</dbReference>
<dbReference type="GO" id="GO:0042733">
    <property type="term" value="P:embryonic digit morphogenesis"/>
    <property type="evidence" value="ECO:0000315"/>
    <property type="project" value="MGI"/>
</dbReference>
<dbReference type="GO" id="GO:0048702">
    <property type="term" value="P:embryonic neurocranium morphogenesis"/>
    <property type="evidence" value="ECO:0000315"/>
    <property type="project" value="MGI"/>
</dbReference>
<dbReference type="GO" id="GO:0061548">
    <property type="term" value="P:ganglion development"/>
    <property type="evidence" value="ECO:0000315"/>
    <property type="project" value="MGI"/>
</dbReference>
<dbReference type="GO" id="GO:0060173">
    <property type="term" value="P:limb development"/>
    <property type="evidence" value="ECO:0000315"/>
    <property type="project" value="MGI"/>
</dbReference>
<dbReference type="GO" id="GO:0045879">
    <property type="term" value="P:negative regulation of smoothened signaling pathway"/>
    <property type="evidence" value="ECO:0000315"/>
    <property type="project" value="MGI"/>
</dbReference>
<dbReference type="GO" id="GO:0001843">
    <property type="term" value="P:neural tube closure"/>
    <property type="evidence" value="ECO:0000315"/>
    <property type="project" value="MGI"/>
</dbReference>
<dbReference type="GO" id="GO:0021915">
    <property type="term" value="P:neural tube development"/>
    <property type="evidence" value="ECO:0000315"/>
    <property type="project" value="MGI"/>
</dbReference>
<dbReference type="GO" id="GO:0001841">
    <property type="term" value="P:neural tube formation"/>
    <property type="evidence" value="ECO:0000315"/>
    <property type="project" value="MGI"/>
</dbReference>
<dbReference type="GO" id="GO:0061512">
    <property type="term" value="P:protein localization to cilium"/>
    <property type="evidence" value="ECO:0000315"/>
    <property type="project" value="UniProtKB"/>
</dbReference>
<dbReference type="GO" id="GO:0008277">
    <property type="term" value="P:regulation of G protein-coupled receptor signaling pathway"/>
    <property type="evidence" value="ECO:0000315"/>
    <property type="project" value="MGI"/>
</dbReference>
<dbReference type="GO" id="GO:0008589">
    <property type="term" value="P:regulation of smoothened signaling pathway"/>
    <property type="evidence" value="ECO:0000315"/>
    <property type="project" value="MGI"/>
</dbReference>
<dbReference type="GO" id="GO:0007224">
    <property type="term" value="P:smoothened signaling pathway"/>
    <property type="evidence" value="ECO:0000315"/>
    <property type="project" value="MGI"/>
</dbReference>
<dbReference type="GO" id="GO:0060831">
    <property type="term" value="P:smoothened signaling pathway involved in dorsal/ventral neural tube patterning"/>
    <property type="evidence" value="ECO:0000315"/>
    <property type="project" value="MGI"/>
</dbReference>
<dbReference type="FunFam" id="3.20.90.10:FF:000001">
    <property type="entry name" value="Tubby-like protein"/>
    <property type="match status" value="1"/>
</dbReference>
<dbReference type="Gene3D" id="3.20.90.10">
    <property type="entry name" value="Tubby Protein, Chain A"/>
    <property type="match status" value="1"/>
</dbReference>
<dbReference type="InterPro" id="IPR025659">
    <property type="entry name" value="Tubby-like_C"/>
</dbReference>
<dbReference type="InterPro" id="IPR000007">
    <property type="entry name" value="Tubby_C"/>
</dbReference>
<dbReference type="InterPro" id="IPR018066">
    <property type="entry name" value="Tubby_C_CS"/>
</dbReference>
<dbReference type="InterPro" id="IPR005398">
    <property type="entry name" value="Tubby_N"/>
</dbReference>
<dbReference type="PANTHER" id="PTHR16517">
    <property type="entry name" value="TUBBY-RELATED"/>
    <property type="match status" value="1"/>
</dbReference>
<dbReference type="PANTHER" id="PTHR16517:SF138">
    <property type="entry name" value="TUBBY-RELATED PROTEIN 3"/>
    <property type="match status" value="1"/>
</dbReference>
<dbReference type="Pfam" id="PF01167">
    <property type="entry name" value="Tub"/>
    <property type="match status" value="1"/>
</dbReference>
<dbReference type="Pfam" id="PF16322">
    <property type="entry name" value="Tub_N"/>
    <property type="match status" value="2"/>
</dbReference>
<dbReference type="PRINTS" id="PR01573">
    <property type="entry name" value="SUPERTUBBY"/>
</dbReference>
<dbReference type="PRINTS" id="PR01574">
    <property type="entry name" value="TUBBYPROTEIN"/>
</dbReference>
<dbReference type="SUPFAM" id="SSF54518">
    <property type="entry name" value="Tubby C-terminal domain-like"/>
    <property type="match status" value="1"/>
</dbReference>
<dbReference type="PROSITE" id="PS01200">
    <property type="entry name" value="TUB_1"/>
    <property type="match status" value="1"/>
</dbReference>
<dbReference type="PROSITE" id="PS01201">
    <property type="entry name" value="TUB_2"/>
    <property type="match status" value="1"/>
</dbReference>
<keyword id="KW-1003">Cell membrane</keyword>
<keyword id="KW-0966">Cell projection</keyword>
<keyword id="KW-0969">Cilium</keyword>
<keyword id="KW-0963">Cytoplasm</keyword>
<keyword id="KW-0217">Developmental protein</keyword>
<keyword id="KW-0472">Membrane</keyword>
<keyword id="KW-0539">Nucleus</keyword>
<keyword id="KW-1185">Reference proteome</keyword>
<keyword id="KW-0964">Secreted</keyword>
<feature type="chain" id="PRO_0000186471" description="Tubby-related protein 3">
    <location>
        <begin position="1"/>
        <end position="460"/>
    </location>
</feature>
<feature type="region of interest" description="Disordered" evidence="3">
    <location>
        <begin position="37"/>
        <end position="132"/>
    </location>
</feature>
<feature type="region of interest" description="Disordered" evidence="3">
    <location>
        <begin position="151"/>
        <end position="193"/>
    </location>
</feature>
<feature type="compositionally biased region" description="Acidic residues" evidence="3">
    <location>
        <begin position="151"/>
        <end position="162"/>
    </location>
</feature>
<feature type="compositionally biased region" description="Low complexity" evidence="3">
    <location>
        <begin position="166"/>
        <end position="188"/>
    </location>
</feature>
<comment type="function">
    <text evidence="5 6 7">Negative regulator of the Shh signaling transduction pathway: recruited to primary cilia via association with the IFT complex A (IFT-A) and is required for recruitment of G protein-coupled receptor GPR161 to cilia, a promoter of PKA-dependent basal repression machinery in Shh signaling. Binds to phosphorylated inositide (phosphoinositide) lipids. Both IFT-A- and phosphoinositide-binding properties are required to regulate ciliary G protein-coupled receptor trafficking. During adipogenesis, regulates ciliary trafficking of FFAR4 in preadipocytes.</text>
</comment>
<comment type="subunit">
    <text evidence="2">Associates with the IFT complex A (IFT-A) (By similarity). Interacts with SIRT1 (By similarity).</text>
</comment>
<comment type="subcellular location">
    <subcellularLocation>
        <location>Nucleus</location>
    </subcellularLocation>
    <subcellularLocation>
        <location>Cell membrane</location>
    </subcellularLocation>
    <subcellularLocation>
        <location>Cell projection</location>
        <location>Cilium</location>
    </subcellularLocation>
    <subcellularLocation>
        <location>Cytoplasm</location>
    </subcellularLocation>
    <subcellularLocation>
        <location>Secreted</location>
    </subcellularLocation>
    <text evidence="1">Translocates from the plasma membrane to the nucleus upon activation of guanine nucleotide-binding protein G(q) subunit alpha (By similarity). Does not have a cleavable signal peptide and is secreted by a non-conventional pathway.</text>
</comment>
<comment type="tissue specificity">
    <text evidence="8">Widely expressed including eyes and adipose depots.</text>
</comment>
<comment type="developmental stage">
    <text evidence="4">Ubiquitously expressed during development.</text>
</comment>
<comment type="disruption phenotype">
    <text evidence="4 5 6">Failure of neural tube closure and death by embryonic day 14.5. Failure of cranial neural tube closure coincident with increased neuroepithelial apoptosis specifically in the hindbrain and the caudal neural tube. In addition, the number of tubulin beta-3 positive cells is significantly decreased in the embryonic hindbrain. Morphological defects in the embryonic craniofacial regions, the spinal neural tube and the limbs.</text>
</comment>
<comment type="similarity">
    <text evidence="9">Belongs to the TUB family.</text>
</comment>
<gene>
    <name evidence="10" type="primary">Tulp3</name>
</gene>
<sequence length="460" mass="51231">MEAARCAPGPRGDSAFDDETLRLRQLKLDNQRALLEKKQRKKRLEPLMVQPNPEARLRRLKPRGSEEHTPLVDPQMPRSDVILHGIDGPAAFLKPEAQDLESKPQVLSVGSPAPEEGTEGSADGESPEETAPKPDLQEILQKHGILSSVNYDEEPDKEEDEGGNLSSPSARSEESAAASQKAASETGASGVTAQQGDAQLGEVENLEDFAYSPAPRGVTVKCKVTRDKKGMDRGLFPTYYMHLEREENRKIFLLAGRKRKKSKTSNYLVSTDPTDLSREGESYIGKLRSNLMGTKFTVYDHGVNPVKAQGLVEKAHTRQELAAICYETNVLGFKGPRKMSVIIPGMNMNHERIPFRPRNEHESLLSKWQNKSMENLIELHNKAPVWNDDTQSYVLNFHGRVTQASVKNFQIVHGNDPDYIVMQFGRVADDVFTLDYNYPLCALQAFAIGLSSFDSKLACE</sequence>
<accession>O88413</accession>
<reference key="1">
    <citation type="journal article" date="1998" name="Genomics">
        <title>Molecular characterization of a novel tubby gene family member, TULP3, in mouse and humans.</title>
        <authorList>
            <person name="Nishina P.M."/>
            <person name="North M.A."/>
            <person name="Ikeda A."/>
            <person name="Yan Y."/>
            <person name="Naggert J.K."/>
        </authorList>
    </citation>
    <scope>NUCLEOTIDE SEQUENCE [MRNA]</scope>
    <scope>TISSUE SPECIFICITY</scope>
    <source>
        <strain>BALB/cJ</strain>
    </source>
</reference>
<reference key="2">
    <citation type="submission" date="1998-08" db="EMBL/GenBank/DDBJ databases">
        <authorList>
            <person name="Shirayoshi Y."/>
            <person name="Kawamura A."/>
            <person name="Nakatsuji N."/>
        </authorList>
    </citation>
    <scope>NUCLEOTIDE SEQUENCE [MRNA]</scope>
    <source>
        <strain>ICR</strain>
    </source>
</reference>
<reference key="3">
    <citation type="journal article" date="2004" name="Genome Res.">
        <title>The status, quality, and expansion of the NIH full-length cDNA project: the Mammalian Gene Collection (MGC).</title>
        <authorList>
            <consortium name="The MGC Project Team"/>
        </authorList>
    </citation>
    <scope>NUCLEOTIDE SEQUENCE [LARGE SCALE MRNA]</scope>
    <source>
        <strain>C57BL/6J</strain>
        <tissue>Brain</tissue>
    </source>
</reference>
<reference key="4">
    <citation type="journal article" date="2001" name="Hum. Mol. Genet.">
        <title>Neural tube defects and neuroepithelial cell death in Tulp3 knockout mice.</title>
        <authorList>
            <person name="Ikeda A."/>
            <person name="Ikeda S."/>
            <person name="Gridley T."/>
            <person name="Nishina P.M."/>
            <person name="Naggert J.K."/>
        </authorList>
    </citation>
    <scope>DEVELOPMENTAL STAGE</scope>
    <scope>DISRUPTION PHENOTYPE</scope>
</reference>
<reference key="5">
    <citation type="journal article" date="2009" name="Dev. Dyn.">
        <title>Tulp3 is a critical repressor of mouse hedgehog signaling.</title>
        <authorList>
            <person name="Cameron D.A."/>
            <person name="Pennimpede T."/>
            <person name="Petkovich M."/>
        </authorList>
    </citation>
    <scope>FUNCTION IN THE SHH PATHWAY</scope>
    <scope>DISRUPTION PHENOTYPE</scope>
</reference>
<reference key="6">
    <citation type="journal article" date="2009" name="FEBS Lett.">
        <title>Unconventional secretion of tubby and tubby-like protein 1.</title>
        <authorList>
            <person name="Caberoy N.B."/>
            <person name="Li W."/>
        </authorList>
    </citation>
    <scope>SUBCELLULAR LOCATION</scope>
</reference>
<reference key="7">
    <citation type="journal article" date="2009" name="Hum. Mol. Genet.">
        <title>Tubby-like protein 3 (TULP3) regulates patterning in the mouse embryo through inhibition of Hedgehog signaling.</title>
        <authorList>
            <person name="Norman R.X."/>
            <person name="Ko H.W."/>
            <person name="Huang V."/>
            <person name="Eun C.M."/>
            <person name="Abler L.L."/>
            <person name="Zhang Z."/>
            <person name="Sun X."/>
            <person name="Eggenschwiler J.T."/>
        </authorList>
    </citation>
    <scope>FUNCTION IN THE SHH PATHWAY</scope>
    <scope>DISRUPTION PHENOTYPE</scope>
    <scope>SUBCELLULAR LOCATION</scope>
</reference>
<reference key="8">
    <citation type="journal article" date="2011" name="Proc. Natl. Acad. Sci. U.S.A.">
        <title>Intraflagellar transport protein 122 antagonizes Sonic Hedgehog signaling and controls ciliary localization of pathway components.</title>
        <authorList>
            <person name="Qin J."/>
            <person name="Lin Y."/>
            <person name="Norman R.X."/>
            <person name="Ko H.W."/>
            <person name="Eggenschwiler J.T."/>
        </authorList>
    </citation>
    <scope>SUBCELLULAR LOCATION</scope>
</reference>
<reference key="9">
    <citation type="journal article" date="2019" name="Cell">
        <title>Omega-3 Fatty Acids Activate Ciliary FFAR4 to Control Adipogenesis.</title>
        <authorList>
            <person name="Hilgendorf K.I."/>
            <person name="Johnson C.T."/>
            <person name="Mezger A."/>
            <person name="Rice S.L."/>
            <person name="Norris A.M."/>
            <person name="Demeter J."/>
            <person name="Greenleaf W.J."/>
            <person name="Reiter J.F."/>
            <person name="Kopinke D."/>
            <person name="Jackson P.K."/>
        </authorList>
    </citation>
    <scope>FUNCTION</scope>
</reference>